<sequence>MSRLHHQQGGQPSQRMLRVAELVRHAMSELLTRSDINDPALEGKVITVPDVRMSPDLKLATVYVMPLGGENVTEVLAALDRHKKLLRGEIARRVSLRFAPDVRFKADPGFEYSGKIDALLSSPKVKQDLEVQDLELKDSGCAGAPAKTGPAGDGE</sequence>
<dbReference type="EMBL" id="CP001280">
    <property type="protein sequence ID" value="ACK51225.1"/>
    <property type="molecule type" value="Genomic_DNA"/>
</dbReference>
<dbReference type="SMR" id="B8EIA6"/>
<dbReference type="STRING" id="395965.Msil_2294"/>
<dbReference type="KEGG" id="msl:Msil_2294"/>
<dbReference type="eggNOG" id="COG0858">
    <property type="taxonomic scope" value="Bacteria"/>
</dbReference>
<dbReference type="HOGENOM" id="CLU_089475_1_0_5"/>
<dbReference type="OrthoDB" id="9805051at2"/>
<dbReference type="Proteomes" id="UP000002257">
    <property type="component" value="Chromosome"/>
</dbReference>
<dbReference type="GO" id="GO:0005829">
    <property type="term" value="C:cytosol"/>
    <property type="evidence" value="ECO:0007669"/>
    <property type="project" value="TreeGrafter"/>
</dbReference>
<dbReference type="GO" id="GO:0043024">
    <property type="term" value="F:ribosomal small subunit binding"/>
    <property type="evidence" value="ECO:0007669"/>
    <property type="project" value="TreeGrafter"/>
</dbReference>
<dbReference type="GO" id="GO:0030490">
    <property type="term" value="P:maturation of SSU-rRNA"/>
    <property type="evidence" value="ECO:0007669"/>
    <property type="project" value="UniProtKB-UniRule"/>
</dbReference>
<dbReference type="Gene3D" id="3.30.300.20">
    <property type="match status" value="1"/>
</dbReference>
<dbReference type="HAMAP" id="MF_00003">
    <property type="entry name" value="RbfA"/>
    <property type="match status" value="1"/>
</dbReference>
<dbReference type="InterPro" id="IPR015946">
    <property type="entry name" value="KH_dom-like_a/b"/>
</dbReference>
<dbReference type="InterPro" id="IPR000238">
    <property type="entry name" value="RbfA"/>
</dbReference>
<dbReference type="InterPro" id="IPR023799">
    <property type="entry name" value="RbfA_dom_sf"/>
</dbReference>
<dbReference type="InterPro" id="IPR020053">
    <property type="entry name" value="Ribosome-bd_factorA_CS"/>
</dbReference>
<dbReference type="NCBIfam" id="NF001802">
    <property type="entry name" value="PRK00521.2-5"/>
    <property type="match status" value="1"/>
</dbReference>
<dbReference type="NCBIfam" id="TIGR00082">
    <property type="entry name" value="rbfA"/>
    <property type="match status" value="1"/>
</dbReference>
<dbReference type="PANTHER" id="PTHR33515">
    <property type="entry name" value="RIBOSOME-BINDING FACTOR A, CHLOROPLASTIC-RELATED"/>
    <property type="match status" value="1"/>
</dbReference>
<dbReference type="PANTHER" id="PTHR33515:SF1">
    <property type="entry name" value="RIBOSOME-BINDING FACTOR A, CHLOROPLASTIC-RELATED"/>
    <property type="match status" value="1"/>
</dbReference>
<dbReference type="Pfam" id="PF02033">
    <property type="entry name" value="RBFA"/>
    <property type="match status" value="1"/>
</dbReference>
<dbReference type="SUPFAM" id="SSF89919">
    <property type="entry name" value="Ribosome-binding factor A, RbfA"/>
    <property type="match status" value="1"/>
</dbReference>
<dbReference type="PROSITE" id="PS01319">
    <property type="entry name" value="RBFA"/>
    <property type="match status" value="1"/>
</dbReference>
<name>RBFA_METSB</name>
<protein>
    <recommendedName>
        <fullName evidence="1">Ribosome-binding factor A</fullName>
    </recommendedName>
</protein>
<proteinExistence type="inferred from homology"/>
<feature type="chain" id="PRO_1000193266" description="Ribosome-binding factor A">
    <location>
        <begin position="1"/>
        <end position="155"/>
    </location>
</feature>
<accession>B8EIA6</accession>
<comment type="function">
    <text evidence="1">One of several proteins that assist in the late maturation steps of the functional core of the 30S ribosomal subunit. Associates with free 30S ribosomal subunits (but not with 30S subunits that are part of 70S ribosomes or polysomes). Required for efficient processing of 16S rRNA. May interact with the 5'-terminal helix region of 16S rRNA.</text>
</comment>
<comment type="subunit">
    <text evidence="1">Monomer. Binds 30S ribosomal subunits, but not 50S ribosomal subunits or 70S ribosomes.</text>
</comment>
<comment type="subcellular location">
    <subcellularLocation>
        <location evidence="1">Cytoplasm</location>
    </subcellularLocation>
</comment>
<comment type="similarity">
    <text evidence="1">Belongs to the RbfA family.</text>
</comment>
<organism>
    <name type="scientific">Methylocella silvestris (strain DSM 15510 / CIP 108128 / LMG 27833 / NCIMB 13906 / BL2)</name>
    <dbReference type="NCBI Taxonomy" id="395965"/>
    <lineage>
        <taxon>Bacteria</taxon>
        <taxon>Pseudomonadati</taxon>
        <taxon>Pseudomonadota</taxon>
        <taxon>Alphaproteobacteria</taxon>
        <taxon>Hyphomicrobiales</taxon>
        <taxon>Beijerinckiaceae</taxon>
        <taxon>Methylocella</taxon>
    </lineage>
</organism>
<reference key="1">
    <citation type="journal article" date="2010" name="J. Bacteriol.">
        <title>Complete genome sequence of the aerobic facultative methanotroph Methylocella silvestris BL2.</title>
        <authorList>
            <person name="Chen Y."/>
            <person name="Crombie A."/>
            <person name="Rahman M.T."/>
            <person name="Dedysh S.N."/>
            <person name="Liesack W."/>
            <person name="Stott M.B."/>
            <person name="Alam M."/>
            <person name="Theisen A.R."/>
            <person name="Murrell J.C."/>
            <person name="Dunfield P.F."/>
        </authorList>
    </citation>
    <scope>NUCLEOTIDE SEQUENCE [LARGE SCALE GENOMIC DNA]</scope>
    <source>
        <strain>DSM 15510 / CIP 108128 / LMG 27833 / NCIMB 13906 / BL2</strain>
    </source>
</reference>
<evidence type="ECO:0000255" key="1">
    <source>
        <dbReference type="HAMAP-Rule" id="MF_00003"/>
    </source>
</evidence>
<gene>
    <name evidence="1" type="primary">rbfA</name>
    <name type="ordered locus">Msil_2294</name>
</gene>
<keyword id="KW-0963">Cytoplasm</keyword>
<keyword id="KW-1185">Reference proteome</keyword>
<keyword id="KW-0690">Ribosome biogenesis</keyword>